<gene>
    <name evidence="1" type="primary">gpmI</name>
    <name type="ordered locus">VS_0235</name>
</gene>
<reference key="1">
    <citation type="submission" date="2009-02" db="EMBL/GenBank/DDBJ databases">
        <title>Vibrio splendidus str. LGP32 complete genome.</title>
        <authorList>
            <person name="Mazel D."/>
            <person name="Le Roux F."/>
        </authorList>
    </citation>
    <scope>NUCLEOTIDE SEQUENCE [LARGE SCALE GENOMIC DNA]</scope>
    <source>
        <strain>LGP32</strain>
    </source>
</reference>
<comment type="function">
    <text evidence="1">Catalyzes the interconversion of 2-phosphoglycerate and 3-phosphoglycerate.</text>
</comment>
<comment type="catalytic activity">
    <reaction evidence="1">
        <text>(2R)-2-phosphoglycerate = (2R)-3-phosphoglycerate</text>
        <dbReference type="Rhea" id="RHEA:15901"/>
        <dbReference type="ChEBI" id="CHEBI:58272"/>
        <dbReference type="ChEBI" id="CHEBI:58289"/>
        <dbReference type="EC" id="5.4.2.12"/>
    </reaction>
</comment>
<comment type="cofactor">
    <cofactor evidence="1">
        <name>Mn(2+)</name>
        <dbReference type="ChEBI" id="CHEBI:29035"/>
    </cofactor>
    <text evidence="1">Binds 2 manganese ions per subunit.</text>
</comment>
<comment type="pathway">
    <text evidence="1">Carbohydrate degradation; glycolysis; pyruvate from D-glyceraldehyde 3-phosphate: step 3/5.</text>
</comment>
<comment type="subunit">
    <text evidence="1">Monomer.</text>
</comment>
<comment type="similarity">
    <text evidence="1">Belongs to the BPG-independent phosphoglycerate mutase family.</text>
</comment>
<protein>
    <recommendedName>
        <fullName evidence="1">2,3-bisphosphoglycerate-independent phosphoglycerate mutase</fullName>
        <shortName evidence="1">BPG-independent PGAM</shortName>
        <shortName evidence="1">Phosphoglyceromutase</shortName>
        <shortName evidence="1">iPGM</shortName>
        <ecNumber evidence="1">5.4.2.12</ecNumber>
    </recommendedName>
</protein>
<dbReference type="EC" id="5.4.2.12" evidence="1"/>
<dbReference type="EMBL" id="FM954972">
    <property type="protein sequence ID" value="CAV17266.1"/>
    <property type="molecule type" value="Genomic_DNA"/>
</dbReference>
<dbReference type="SMR" id="B7VHQ4"/>
<dbReference type="STRING" id="575788.VS_0235"/>
<dbReference type="KEGG" id="vsp:VS_0235"/>
<dbReference type="PATRIC" id="fig|575788.5.peg.1623"/>
<dbReference type="eggNOG" id="COG0696">
    <property type="taxonomic scope" value="Bacteria"/>
</dbReference>
<dbReference type="HOGENOM" id="CLU_026099_2_0_6"/>
<dbReference type="UniPathway" id="UPA00109">
    <property type="reaction ID" value="UER00186"/>
</dbReference>
<dbReference type="Proteomes" id="UP000009100">
    <property type="component" value="Chromosome 1"/>
</dbReference>
<dbReference type="GO" id="GO:0005829">
    <property type="term" value="C:cytosol"/>
    <property type="evidence" value="ECO:0007669"/>
    <property type="project" value="TreeGrafter"/>
</dbReference>
<dbReference type="GO" id="GO:0030145">
    <property type="term" value="F:manganese ion binding"/>
    <property type="evidence" value="ECO:0007669"/>
    <property type="project" value="UniProtKB-UniRule"/>
</dbReference>
<dbReference type="GO" id="GO:0004619">
    <property type="term" value="F:phosphoglycerate mutase activity"/>
    <property type="evidence" value="ECO:0007669"/>
    <property type="project" value="UniProtKB-EC"/>
</dbReference>
<dbReference type="GO" id="GO:0006007">
    <property type="term" value="P:glucose catabolic process"/>
    <property type="evidence" value="ECO:0007669"/>
    <property type="project" value="InterPro"/>
</dbReference>
<dbReference type="GO" id="GO:0006096">
    <property type="term" value="P:glycolytic process"/>
    <property type="evidence" value="ECO:0007669"/>
    <property type="project" value="UniProtKB-UniRule"/>
</dbReference>
<dbReference type="CDD" id="cd16010">
    <property type="entry name" value="iPGM"/>
    <property type="match status" value="1"/>
</dbReference>
<dbReference type="FunFam" id="3.40.1450.10:FF:000001">
    <property type="entry name" value="2,3-bisphosphoglycerate-independent phosphoglycerate mutase"/>
    <property type="match status" value="1"/>
</dbReference>
<dbReference type="FunFam" id="3.40.720.10:FF:000001">
    <property type="entry name" value="2,3-bisphosphoglycerate-independent phosphoglycerate mutase"/>
    <property type="match status" value="1"/>
</dbReference>
<dbReference type="Gene3D" id="3.40.720.10">
    <property type="entry name" value="Alkaline Phosphatase, subunit A"/>
    <property type="match status" value="1"/>
</dbReference>
<dbReference type="Gene3D" id="3.40.1450.10">
    <property type="entry name" value="BPG-independent phosphoglycerate mutase, domain B"/>
    <property type="match status" value="1"/>
</dbReference>
<dbReference type="HAMAP" id="MF_01038">
    <property type="entry name" value="GpmI"/>
    <property type="match status" value="1"/>
</dbReference>
<dbReference type="InterPro" id="IPR017850">
    <property type="entry name" value="Alkaline_phosphatase_core_sf"/>
</dbReference>
<dbReference type="InterPro" id="IPR011258">
    <property type="entry name" value="BPG-indep_PGM_N"/>
</dbReference>
<dbReference type="InterPro" id="IPR006124">
    <property type="entry name" value="Metalloenzyme"/>
</dbReference>
<dbReference type="InterPro" id="IPR036646">
    <property type="entry name" value="PGAM_B_sf"/>
</dbReference>
<dbReference type="InterPro" id="IPR005995">
    <property type="entry name" value="Pgm_bpd_ind"/>
</dbReference>
<dbReference type="NCBIfam" id="TIGR01307">
    <property type="entry name" value="pgm_bpd_ind"/>
    <property type="match status" value="1"/>
</dbReference>
<dbReference type="NCBIfam" id="NF003897">
    <property type="entry name" value="PRK05434.1-5"/>
    <property type="match status" value="1"/>
</dbReference>
<dbReference type="PANTHER" id="PTHR31637">
    <property type="entry name" value="2,3-BISPHOSPHOGLYCERATE-INDEPENDENT PHOSPHOGLYCERATE MUTASE"/>
    <property type="match status" value="1"/>
</dbReference>
<dbReference type="PANTHER" id="PTHR31637:SF0">
    <property type="entry name" value="2,3-BISPHOSPHOGLYCERATE-INDEPENDENT PHOSPHOGLYCERATE MUTASE"/>
    <property type="match status" value="1"/>
</dbReference>
<dbReference type="Pfam" id="PF06415">
    <property type="entry name" value="iPGM_N"/>
    <property type="match status" value="1"/>
</dbReference>
<dbReference type="Pfam" id="PF01676">
    <property type="entry name" value="Metalloenzyme"/>
    <property type="match status" value="1"/>
</dbReference>
<dbReference type="PIRSF" id="PIRSF001492">
    <property type="entry name" value="IPGAM"/>
    <property type="match status" value="1"/>
</dbReference>
<dbReference type="SUPFAM" id="SSF64158">
    <property type="entry name" value="2,3-Bisphosphoglycerate-independent phosphoglycerate mutase, substrate-binding domain"/>
    <property type="match status" value="1"/>
</dbReference>
<dbReference type="SUPFAM" id="SSF53649">
    <property type="entry name" value="Alkaline phosphatase-like"/>
    <property type="match status" value="1"/>
</dbReference>
<keyword id="KW-0324">Glycolysis</keyword>
<keyword id="KW-0413">Isomerase</keyword>
<keyword id="KW-0464">Manganese</keyword>
<keyword id="KW-0479">Metal-binding</keyword>
<organism>
    <name type="scientific">Vibrio atlanticus (strain LGP32)</name>
    <name type="common">Vibrio splendidus (strain Mel32)</name>
    <dbReference type="NCBI Taxonomy" id="575788"/>
    <lineage>
        <taxon>Bacteria</taxon>
        <taxon>Pseudomonadati</taxon>
        <taxon>Pseudomonadota</taxon>
        <taxon>Gammaproteobacteria</taxon>
        <taxon>Vibrionales</taxon>
        <taxon>Vibrionaceae</taxon>
        <taxon>Vibrio</taxon>
    </lineage>
</organism>
<feature type="chain" id="PRO_1000149493" description="2,3-bisphosphoglycerate-independent phosphoglycerate mutase">
    <location>
        <begin position="1"/>
        <end position="510"/>
    </location>
</feature>
<feature type="active site" description="Phosphoserine intermediate" evidence="1">
    <location>
        <position position="63"/>
    </location>
</feature>
<feature type="binding site" evidence="1">
    <location>
        <position position="13"/>
    </location>
    <ligand>
        <name>Mn(2+)</name>
        <dbReference type="ChEBI" id="CHEBI:29035"/>
        <label>2</label>
    </ligand>
</feature>
<feature type="binding site" evidence="1">
    <location>
        <position position="63"/>
    </location>
    <ligand>
        <name>Mn(2+)</name>
        <dbReference type="ChEBI" id="CHEBI:29035"/>
        <label>2</label>
    </ligand>
</feature>
<feature type="binding site" evidence="1">
    <location>
        <position position="124"/>
    </location>
    <ligand>
        <name>substrate</name>
    </ligand>
</feature>
<feature type="binding site" evidence="1">
    <location>
        <begin position="154"/>
        <end position="155"/>
    </location>
    <ligand>
        <name>substrate</name>
    </ligand>
</feature>
<feature type="binding site" evidence="1">
    <location>
        <position position="186"/>
    </location>
    <ligand>
        <name>substrate</name>
    </ligand>
</feature>
<feature type="binding site" evidence="1">
    <location>
        <position position="192"/>
    </location>
    <ligand>
        <name>substrate</name>
    </ligand>
</feature>
<feature type="binding site" evidence="1">
    <location>
        <begin position="262"/>
        <end position="265"/>
    </location>
    <ligand>
        <name>substrate</name>
    </ligand>
</feature>
<feature type="binding site" evidence="1">
    <location>
        <position position="334"/>
    </location>
    <ligand>
        <name>substrate</name>
    </ligand>
</feature>
<feature type="binding site" evidence="1">
    <location>
        <position position="401"/>
    </location>
    <ligand>
        <name>Mn(2+)</name>
        <dbReference type="ChEBI" id="CHEBI:29035"/>
        <label>1</label>
    </ligand>
</feature>
<feature type="binding site" evidence="1">
    <location>
        <position position="405"/>
    </location>
    <ligand>
        <name>Mn(2+)</name>
        <dbReference type="ChEBI" id="CHEBI:29035"/>
        <label>1</label>
    </ligand>
</feature>
<feature type="binding site" evidence="1">
    <location>
        <position position="442"/>
    </location>
    <ligand>
        <name>Mn(2+)</name>
        <dbReference type="ChEBI" id="CHEBI:29035"/>
        <label>2</label>
    </ligand>
</feature>
<feature type="binding site" evidence="1">
    <location>
        <position position="443"/>
    </location>
    <ligand>
        <name>Mn(2+)</name>
        <dbReference type="ChEBI" id="CHEBI:29035"/>
        <label>2</label>
    </ligand>
</feature>
<feature type="binding site" evidence="1">
    <location>
        <position position="461"/>
    </location>
    <ligand>
        <name>Mn(2+)</name>
        <dbReference type="ChEBI" id="CHEBI:29035"/>
        <label>1</label>
    </ligand>
</feature>
<name>GPMI_VIBA3</name>
<accession>B7VHQ4</accession>
<proteinExistence type="inferred from homology"/>
<sequence length="510" mass="55330">MSAKKPMALVILDGYGYREDNQDNAIANAKTPVLDGLIANQPNTLISASGLDVGLPDGQMGNSEVGHTNIGAGRVVYQDLTRITKSIADGEFGQTEALVNAVDKAVKVDKAVHIMGLMSPGGVHSHEDHIYAAVEMAAARGAEKIYLHAFLDGRDTPPRSAENTLARFQELFAKLGKGRVASLIGRYYAMDRDNNWDRVQESYDLLTQAKAEFTFDTAVAGLEAAYARDENDEFVKATEIKAEGEESAVIVDGDAVIFMNYRADRAREITRAFVPDFDGFARNVFPAIDFVMLTQYAADIPLLCAFPPASLENTYGEWLSKEGKTQLRISETEKYAHVTFFFNGGKEDEFEGEERQLVASPKVATYDLQPEMSAPELTEKLVAAIKGGKYDAIVCNFPNCDMVGHTGVYDAAVKAVESLDECLGKVVEAIKEADGQLLITADHGNAEMMVNPETGGIHTAHTNLPVPLIYVGNKDVEFKEGGKLSDLAPTMLSLSGIDIPVEMSGDVIVK</sequence>
<evidence type="ECO:0000255" key="1">
    <source>
        <dbReference type="HAMAP-Rule" id="MF_01038"/>
    </source>
</evidence>